<accession>B6I0G2</accession>
<keyword id="KW-0378">Hydrolase</keyword>
<keyword id="KW-0479">Metal-binding</keyword>
<keyword id="KW-0659">Purine metabolism</keyword>
<keyword id="KW-0862">Zinc</keyword>
<evidence type="ECO:0000255" key="1">
    <source>
        <dbReference type="HAMAP-Rule" id="MF_01645"/>
    </source>
</evidence>
<reference key="1">
    <citation type="journal article" date="2008" name="DNA Res.">
        <title>Complete genome sequence and comparative analysis of the wild-type commensal Escherichia coli strain SE11 isolated from a healthy adult.</title>
        <authorList>
            <person name="Oshima K."/>
            <person name="Toh H."/>
            <person name="Ogura Y."/>
            <person name="Sasamoto H."/>
            <person name="Morita H."/>
            <person name="Park S.-H."/>
            <person name="Ooka T."/>
            <person name="Iyoda S."/>
            <person name="Taylor T.D."/>
            <person name="Hayashi T."/>
            <person name="Itoh K."/>
            <person name="Hattori M."/>
        </authorList>
    </citation>
    <scope>NUCLEOTIDE SEQUENCE [LARGE SCALE GENOMIC DNA]</scope>
    <source>
        <strain>SE11</strain>
    </source>
</reference>
<organism>
    <name type="scientific">Escherichia coli (strain SE11)</name>
    <dbReference type="NCBI Taxonomy" id="409438"/>
    <lineage>
        <taxon>Bacteria</taxon>
        <taxon>Pseudomonadati</taxon>
        <taxon>Pseudomonadota</taxon>
        <taxon>Gammaproteobacteria</taxon>
        <taxon>Enterobacterales</taxon>
        <taxon>Enterobacteriaceae</taxon>
        <taxon>Escherichia</taxon>
    </lineage>
</organism>
<dbReference type="EC" id="3.5.2.5" evidence="1"/>
<dbReference type="EMBL" id="AP009240">
    <property type="protein sequence ID" value="BAG76061.1"/>
    <property type="molecule type" value="Genomic_DNA"/>
</dbReference>
<dbReference type="RefSeq" id="WP_000006887.1">
    <property type="nucleotide sequence ID" value="NC_011415.1"/>
</dbReference>
<dbReference type="SMR" id="B6I0G2"/>
<dbReference type="GeneID" id="75204378"/>
<dbReference type="KEGG" id="ecy:ECSE_0537"/>
<dbReference type="HOGENOM" id="CLU_015572_4_2_6"/>
<dbReference type="UniPathway" id="UPA00395">
    <property type="reaction ID" value="UER00653"/>
</dbReference>
<dbReference type="Proteomes" id="UP000008199">
    <property type="component" value="Chromosome"/>
</dbReference>
<dbReference type="GO" id="GO:0005737">
    <property type="term" value="C:cytoplasm"/>
    <property type="evidence" value="ECO:0007669"/>
    <property type="project" value="TreeGrafter"/>
</dbReference>
<dbReference type="GO" id="GO:0004038">
    <property type="term" value="F:allantoinase activity"/>
    <property type="evidence" value="ECO:0007669"/>
    <property type="project" value="UniProtKB-UniRule"/>
</dbReference>
<dbReference type="GO" id="GO:0050897">
    <property type="term" value="F:cobalt ion binding"/>
    <property type="evidence" value="ECO:0007669"/>
    <property type="project" value="InterPro"/>
</dbReference>
<dbReference type="GO" id="GO:0008270">
    <property type="term" value="F:zinc ion binding"/>
    <property type="evidence" value="ECO:0007669"/>
    <property type="project" value="InterPro"/>
</dbReference>
<dbReference type="GO" id="GO:0000256">
    <property type="term" value="P:allantoin catabolic process"/>
    <property type="evidence" value="ECO:0007669"/>
    <property type="project" value="UniProtKB-UniRule"/>
</dbReference>
<dbReference type="GO" id="GO:0006145">
    <property type="term" value="P:purine nucleobase catabolic process"/>
    <property type="evidence" value="ECO:0007669"/>
    <property type="project" value="TreeGrafter"/>
</dbReference>
<dbReference type="CDD" id="cd01315">
    <property type="entry name" value="L-HYD_ALN"/>
    <property type="match status" value="1"/>
</dbReference>
<dbReference type="FunFam" id="3.20.20.140:FF:000013">
    <property type="entry name" value="Allantoinase"/>
    <property type="match status" value="1"/>
</dbReference>
<dbReference type="Gene3D" id="3.20.20.140">
    <property type="entry name" value="Metal-dependent hydrolases"/>
    <property type="match status" value="1"/>
</dbReference>
<dbReference type="Gene3D" id="2.30.40.10">
    <property type="entry name" value="Urease, subunit C, domain 1"/>
    <property type="match status" value="1"/>
</dbReference>
<dbReference type="HAMAP" id="MF_01645">
    <property type="entry name" value="Hydantoinase"/>
    <property type="match status" value="1"/>
</dbReference>
<dbReference type="InterPro" id="IPR017593">
    <property type="entry name" value="Allantoinase"/>
</dbReference>
<dbReference type="InterPro" id="IPR047604">
    <property type="entry name" value="Allantoinase_bact"/>
</dbReference>
<dbReference type="InterPro" id="IPR006680">
    <property type="entry name" value="Amidohydro-rel"/>
</dbReference>
<dbReference type="InterPro" id="IPR050138">
    <property type="entry name" value="DHOase/Allantoinase_Hydrolase"/>
</dbReference>
<dbReference type="InterPro" id="IPR011059">
    <property type="entry name" value="Metal-dep_hydrolase_composite"/>
</dbReference>
<dbReference type="InterPro" id="IPR032466">
    <property type="entry name" value="Metal_Hydrolase"/>
</dbReference>
<dbReference type="NCBIfam" id="TIGR03178">
    <property type="entry name" value="allantoinase"/>
    <property type="match status" value="1"/>
</dbReference>
<dbReference type="NCBIfam" id="NF005960">
    <property type="entry name" value="PRK08044.1"/>
    <property type="match status" value="1"/>
</dbReference>
<dbReference type="PANTHER" id="PTHR43668">
    <property type="entry name" value="ALLANTOINASE"/>
    <property type="match status" value="1"/>
</dbReference>
<dbReference type="PANTHER" id="PTHR43668:SF4">
    <property type="entry name" value="ALLANTOINASE"/>
    <property type="match status" value="1"/>
</dbReference>
<dbReference type="Pfam" id="PF01979">
    <property type="entry name" value="Amidohydro_1"/>
    <property type="match status" value="1"/>
</dbReference>
<dbReference type="SUPFAM" id="SSF51338">
    <property type="entry name" value="Composite domain of metallo-dependent hydrolases"/>
    <property type="match status" value="1"/>
</dbReference>
<dbReference type="SUPFAM" id="SSF51556">
    <property type="entry name" value="Metallo-dependent hydrolases"/>
    <property type="match status" value="1"/>
</dbReference>
<name>ALLB_ECOSE</name>
<feature type="chain" id="PRO_1000186924" description="Allantoinase">
    <location>
        <begin position="1"/>
        <end position="453"/>
    </location>
</feature>
<feature type="binding site" evidence="1">
    <location>
        <position position="59"/>
    </location>
    <ligand>
        <name>Zn(2+)</name>
        <dbReference type="ChEBI" id="CHEBI:29105"/>
        <label>1</label>
    </ligand>
</feature>
<feature type="binding site" evidence="1">
    <location>
        <position position="61"/>
    </location>
    <ligand>
        <name>Zn(2+)</name>
        <dbReference type="ChEBI" id="CHEBI:29105"/>
        <label>1</label>
    </ligand>
</feature>
<feature type="binding site" description="via carbamate group" evidence="1">
    <location>
        <position position="146"/>
    </location>
    <ligand>
        <name>Zn(2+)</name>
        <dbReference type="ChEBI" id="CHEBI:29105"/>
        <label>1</label>
    </ligand>
</feature>
<feature type="binding site" description="via carbamate group" evidence="1">
    <location>
        <position position="146"/>
    </location>
    <ligand>
        <name>Zn(2+)</name>
        <dbReference type="ChEBI" id="CHEBI:29105"/>
        <label>2</label>
    </ligand>
</feature>
<feature type="binding site" evidence="1">
    <location>
        <position position="186"/>
    </location>
    <ligand>
        <name>Zn(2+)</name>
        <dbReference type="ChEBI" id="CHEBI:29105"/>
        <label>2</label>
    </ligand>
</feature>
<feature type="binding site" evidence="1">
    <location>
        <position position="242"/>
    </location>
    <ligand>
        <name>Zn(2+)</name>
        <dbReference type="ChEBI" id="CHEBI:29105"/>
        <label>2</label>
    </ligand>
</feature>
<feature type="binding site" evidence="1">
    <location>
        <position position="315"/>
    </location>
    <ligand>
        <name>Zn(2+)</name>
        <dbReference type="ChEBI" id="CHEBI:29105"/>
        <label>1</label>
    </ligand>
</feature>
<feature type="modified residue" description="N6-carboxylysine" evidence="1">
    <location>
        <position position="146"/>
    </location>
</feature>
<proteinExistence type="inferred from homology"/>
<gene>
    <name evidence="1" type="primary">allB</name>
    <name type="ordered locus">ECSE_0537</name>
</gene>
<sequence length="453" mass="49586">MSFDLIIKNGTVILENEARVVDIAVKGGKIAAIGQDLGDAKEVMDASGLVVSPGMVDAHTHISEPGRSHWEGYETGTRAAAKGGITTMIEMPLNQLPATVDRASIELKFDAAKGKLTIDAAQLGGLVSYNIDRLHELDEVGVVGFKCFVATCGDRGIDNDFRDVNDWQFFKGAQKLGELGQPVLVHCENALICDALGEEAKREGRVTAHDYVASRPVFTEVEAIRRVLYLAKVAGCRLHVCHISSPEGVEEVTRARQEGQDVTCESCPHYFVLDTDQFEEIGTLAKCSPPIRDLENQKGMWEKLFNGEIDCLVSDHSPCPPEMKAGNIMEAWGGIAGLQNCMDVMFDEAVQKRGMSLPMFGKLMATNAADIFGLQQKGRIAPGKDADFVFIQPNSSYVLTNDDLEYRHKVSPYVGRTIGARITKTILRGDVIYDIEQGFPVAPKGQFILKHQQ</sequence>
<protein>
    <recommendedName>
        <fullName evidence="1">Allantoinase</fullName>
        <ecNumber evidence="1">3.5.2.5</ecNumber>
    </recommendedName>
    <alternativeName>
        <fullName evidence="1">Allantoin-utilizing enzyme</fullName>
    </alternativeName>
</protein>
<comment type="function">
    <text evidence="1">Catalyzes the conversion of allantoin (5-ureidohydantoin) to allantoic acid by hydrolytic cleavage of the five-member hydantoin ring.</text>
</comment>
<comment type="catalytic activity">
    <reaction evidence="1">
        <text>(S)-allantoin + H2O = allantoate + H(+)</text>
        <dbReference type="Rhea" id="RHEA:17029"/>
        <dbReference type="ChEBI" id="CHEBI:15377"/>
        <dbReference type="ChEBI" id="CHEBI:15378"/>
        <dbReference type="ChEBI" id="CHEBI:15678"/>
        <dbReference type="ChEBI" id="CHEBI:17536"/>
        <dbReference type="EC" id="3.5.2.5"/>
    </reaction>
</comment>
<comment type="cofactor">
    <cofactor evidence="1">
        <name>Zn(2+)</name>
        <dbReference type="ChEBI" id="CHEBI:29105"/>
    </cofactor>
    <text evidence="1">Binds 2 Zn(2+) ions per subunit.</text>
</comment>
<comment type="pathway">
    <text evidence="1">Nitrogen metabolism; (S)-allantoin degradation; allantoate from (S)-allantoin: step 1/1.</text>
</comment>
<comment type="subunit">
    <text evidence="1">Homotetramer.</text>
</comment>
<comment type="PTM">
    <text evidence="1">Carboxylation allows a single lysine to coordinate two zinc ions.</text>
</comment>
<comment type="similarity">
    <text evidence="1">Belongs to the metallo-dependent hydrolases superfamily. Allantoinase family.</text>
</comment>